<feature type="chain" id="PRO_0000455046" description="Putative serine protease">
    <location>
        <begin position="1" status="less than"/>
        <end position="20" status="greater than"/>
    </location>
</feature>
<feature type="non-terminal residue" evidence="3">
    <location>
        <position position="1"/>
    </location>
</feature>
<feature type="non-terminal residue" evidence="3">
    <location>
        <position position="20"/>
    </location>
</feature>
<keyword id="KW-0903">Direct protein sequencing</keyword>
<keyword id="KW-0378">Hydrolase</keyword>
<keyword id="KW-0391">Immunity</keyword>
<keyword id="KW-0399">Innate immunity</keyword>
<keyword id="KW-0645">Protease</keyword>
<keyword id="KW-1185">Reference proteome</keyword>
<keyword id="KW-0964">Secreted</keyword>
<keyword id="KW-0720">Serine protease</keyword>
<name>PRS_GALME</name>
<sequence length="20" mass="2258">LKDGPCPSYMDTCCLSPDRR</sequence>
<evidence type="ECO:0000250" key="1">
    <source>
        <dbReference type="UniProtKB" id="Q9V3Z2"/>
    </source>
</evidence>
<evidence type="ECO:0000269" key="2">
    <source>
    </source>
</evidence>
<evidence type="ECO:0000303" key="3">
    <source>
    </source>
</evidence>
<evidence type="ECO:0000305" key="4"/>
<protein>
    <recommendedName>
        <fullName evidence="3">Putative serine protease</fullName>
        <ecNumber evidence="1">3.4.21.-</ecNumber>
    </recommendedName>
</protein>
<dbReference type="EC" id="3.4.21.-" evidence="1"/>
<dbReference type="InParanoid" id="C0HLY5"/>
<dbReference type="Proteomes" id="UP000504614">
    <property type="component" value="Unplaced"/>
</dbReference>
<dbReference type="GO" id="GO:0005576">
    <property type="term" value="C:extracellular region"/>
    <property type="evidence" value="ECO:0007669"/>
    <property type="project" value="UniProtKB-SubCell"/>
</dbReference>
<dbReference type="GO" id="GO:0008236">
    <property type="term" value="F:serine-type peptidase activity"/>
    <property type="evidence" value="ECO:0007669"/>
    <property type="project" value="UniProtKB-KW"/>
</dbReference>
<dbReference type="GO" id="GO:0045087">
    <property type="term" value="P:innate immune response"/>
    <property type="evidence" value="ECO:0007669"/>
    <property type="project" value="UniProtKB-KW"/>
</dbReference>
<dbReference type="GO" id="GO:0006508">
    <property type="term" value="P:proteolysis"/>
    <property type="evidence" value="ECO:0007669"/>
    <property type="project" value="UniProtKB-KW"/>
</dbReference>
<proteinExistence type="evidence at protein level"/>
<comment type="function">
    <text evidence="2">Binds the A.niger cell wall component alpha-1,3-glucan, a fungal pathogen-associated molecular pattern (PAMP) that activates the host immune response.</text>
</comment>
<comment type="subcellular location">
    <subcellularLocation>
        <location evidence="2">Secreted</location>
    </subcellularLocation>
    <text evidence="2">Secreted in the hemolymph.</text>
</comment>
<comment type="developmental stage">
    <text evidence="2">Expressed in last instar larvae.</text>
</comment>
<comment type="similarity">
    <text evidence="4">Belongs to the peptidase S1 family.</text>
</comment>
<organism>
    <name type="scientific">Galleria mellonella</name>
    <name type="common">Greater wax moth</name>
    <dbReference type="NCBI Taxonomy" id="7137"/>
    <lineage>
        <taxon>Eukaryota</taxon>
        <taxon>Metazoa</taxon>
        <taxon>Ecdysozoa</taxon>
        <taxon>Arthropoda</taxon>
        <taxon>Hexapoda</taxon>
        <taxon>Insecta</taxon>
        <taxon>Pterygota</taxon>
        <taxon>Neoptera</taxon>
        <taxon>Endopterygota</taxon>
        <taxon>Lepidoptera</taxon>
        <taxon>Glossata</taxon>
        <taxon>Ditrysia</taxon>
        <taxon>Pyraloidea</taxon>
        <taxon>Pyralidae</taxon>
        <taxon>Galleriinae</taxon>
        <taxon>Galleria</taxon>
    </lineage>
</organism>
<accession>C0HLY5</accession>
<reference evidence="4" key="1">
    <citation type="journal article" date="2021" name="Molecules">
        <title>Fungal alpha-1,3-Glucan as a New Pathogen-Associated Molecular Pattern in the Insect Model Host Galleria mellonella.</title>
        <authorList>
            <person name="Staczek S."/>
            <person name="Zdybicka-Barabas A."/>
            <person name="Wojda I."/>
            <person name="Wiater A."/>
            <person name="Mak P."/>
            <person name="Suder P."/>
            <person name="Skrzypiec K."/>
            <person name="Cytrynska M."/>
        </authorList>
    </citation>
    <scope>PROTEIN SEQUENCE</scope>
    <scope>FUNCTION</scope>
    <scope>SUBCELLULAR LOCATION</scope>
    <scope>DEVELOPMENTAL STAGE</scope>
</reference>